<organism>
    <name type="scientific">Schizosaccharomyces pombe (strain 972 / ATCC 24843)</name>
    <name type="common">Fission yeast</name>
    <dbReference type="NCBI Taxonomy" id="284812"/>
    <lineage>
        <taxon>Eukaryota</taxon>
        <taxon>Fungi</taxon>
        <taxon>Dikarya</taxon>
        <taxon>Ascomycota</taxon>
        <taxon>Taphrinomycotina</taxon>
        <taxon>Schizosaccharomycetes</taxon>
        <taxon>Schizosaccharomycetales</taxon>
        <taxon>Schizosaccharomycetaceae</taxon>
        <taxon>Schizosaccharomyces</taxon>
    </lineage>
</organism>
<protein>
    <recommendedName>
        <fullName>Uncharacterized protein C1919.07</fullName>
    </recommendedName>
</protein>
<name>YC67_SCHPO</name>
<accession>O94475</accession>
<evidence type="ECO:0000256" key="1">
    <source>
        <dbReference type="SAM" id="MobiDB-lite"/>
    </source>
</evidence>
<evidence type="ECO:0000269" key="2">
    <source>
    </source>
</evidence>
<reference key="1">
    <citation type="journal article" date="2002" name="Nature">
        <title>The genome sequence of Schizosaccharomyces pombe.</title>
        <authorList>
            <person name="Wood V."/>
            <person name="Gwilliam R."/>
            <person name="Rajandream M.A."/>
            <person name="Lyne M.H."/>
            <person name="Lyne R."/>
            <person name="Stewart A."/>
            <person name="Sgouros J.G."/>
            <person name="Peat N."/>
            <person name="Hayles J."/>
            <person name="Baker S.G."/>
            <person name="Basham D."/>
            <person name="Bowman S."/>
            <person name="Brooks K."/>
            <person name="Brown D."/>
            <person name="Brown S."/>
            <person name="Chillingworth T."/>
            <person name="Churcher C.M."/>
            <person name="Collins M."/>
            <person name="Connor R."/>
            <person name="Cronin A."/>
            <person name="Davis P."/>
            <person name="Feltwell T."/>
            <person name="Fraser A."/>
            <person name="Gentles S."/>
            <person name="Goble A."/>
            <person name="Hamlin N."/>
            <person name="Harris D.E."/>
            <person name="Hidalgo J."/>
            <person name="Hodgson G."/>
            <person name="Holroyd S."/>
            <person name="Hornsby T."/>
            <person name="Howarth S."/>
            <person name="Huckle E.J."/>
            <person name="Hunt S."/>
            <person name="Jagels K."/>
            <person name="James K.D."/>
            <person name="Jones L."/>
            <person name="Jones M."/>
            <person name="Leather S."/>
            <person name="McDonald S."/>
            <person name="McLean J."/>
            <person name="Mooney P."/>
            <person name="Moule S."/>
            <person name="Mungall K.L."/>
            <person name="Murphy L.D."/>
            <person name="Niblett D."/>
            <person name="Odell C."/>
            <person name="Oliver K."/>
            <person name="O'Neil S."/>
            <person name="Pearson D."/>
            <person name="Quail M.A."/>
            <person name="Rabbinowitsch E."/>
            <person name="Rutherford K.M."/>
            <person name="Rutter S."/>
            <person name="Saunders D."/>
            <person name="Seeger K."/>
            <person name="Sharp S."/>
            <person name="Skelton J."/>
            <person name="Simmonds M.N."/>
            <person name="Squares R."/>
            <person name="Squares S."/>
            <person name="Stevens K."/>
            <person name="Taylor K."/>
            <person name="Taylor R.G."/>
            <person name="Tivey A."/>
            <person name="Walsh S.V."/>
            <person name="Warren T."/>
            <person name="Whitehead S."/>
            <person name="Woodward J.R."/>
            <person name="Volckaert G."/>
            <person name="Aert R."/>
            <person name="Robben J."/>
            <person name="Grymonprez B."/>
            <person name="Weltjens I."/>
            <person name="Vanstreels E."/>
            <person name="Rieger M."/>
            <person name="Schaefer M."/>
            <person name="Mueller-Auer S."/>
            <person name="Gabel C."/>
            <person name="Fuchs M."/>
            <person name="Duesterhoeft A."/>
            <person name="Fritzc C."/>
            <person name="Holzer E."/>
            <person name="Moestl D."/>
            <person name="Hilbert H."/>
            <person name="Borzym K."/>
            <person name="Langer I."/>
            <person name="Beck A."/>
            <person name="Lehrach H."/>
            <person name="Reinhardt R."/>
            <person name="Pohl T.M."/>
            <person name="Eger P."/>
            <person name="Zimmermann W."/>
            <person name="Wedler H."/>
            <person name="Wambutt R."/>
            <person name="Purnelle B."/>
            <person name="Goffeau A."/>
            <person name="Cadieu E."/>
            <person name="Dreano S."/>
            <person name="Gloux S."/>
            <person name="Lelaure V."/>
            <person name="Mottier S."/>
            <person name="Galibert F."/>
            <person name="Aves S.J."/>
            <person name="Xiang Z."/>
            <person name="Hunt C."/>
            <person name="Moore K."/>
            <person name="Hurst S.M."/>
            <person name="Lucas M."/>
            <person name="Rochet M."/>
            <person name="Gaillardin C."/>
            <person name="Tallada V.A."/>
            <person name="Garzon A."/>
            <person name="Thode G."/>
            <person name="Daga R.R."/>
            <person name="Cruzado L."/>
            <person name="Jimenez J."/>
            <person name="Sanchez M."/>
            <person name="del Rey F."/>
            <person name="Benito J."/>
            <person name="Dominguez A."/>
            <person name="Revuelta J.L."/>
            <person name="Moreno S."/>
            <person name="Armstrong J."/>
            <person name="Forsburg S.L."/>
            <person name="Cerutti L."/>
            <person name="Lowe T."/>
            <person name="McCombie W.R."/>
            <person name="Paulsen I."/>
            <person name="Potashkin J."/>
            <person name="Shpakovski G.V."/>
            <person name="Ussery D."/>
            <person name="Barrell B.G."/>
            <person name="Nurse P."/>
        </authorList>
    </citation>
    <scope>NUCLEOTIDE SEQUENCE [LARGE SCALE GENOMIC DNA]</scope>
    <source>
        <strain>972 / ATCC 24843</strain>
    </source>
</reference>
<reference key="2">
    <citation type="journal article" date="2006" name="Nat. Biotechnol.">
        <title>ORFeome cloning and global analysis of protein localization in the fission yeast Schizosaccharomyces pombe.</title>
        <authorList>
            <person name="Matsuyama A."/>
            <person name="Arai R."/>
            <person name="Yashiroda Y."/>
            <person name="Shirai A."/>
            <person name="Kamata A."/>
            <person name="Sekido S."/>
            <person name="Kobayashi Y."/>
            <person name="Hashimoto A."/>
            <person name="Hamamoto M."/>
            <person name="Hiraoka Y."/>
            <person name="Horinouchi S."/>
            <person name="Yoshida M."/>
        </authorList>
    </citation>
    <scope>SUBCELLULAR LOCATION [LARGE SCALE ANALYSIS]</scope>
</reference>
<gene>
    <name type="ORF">SPCC1919.07</name>
</gene>
<keyword id="KW-0963">Cytoplasm</keyword>
<keyword id="KW-0539">Nucleus</keyword>
<keyword id="KW-1185">Reference proteome</keyword>
<proteinExistence type="predicted"/>
<feature type="chain" id="PRO_0000304002" description="Uncharacterized protein C1919.07">
    <location>
        <begin position="1"/>
        <end position="206"/>
    </location>
</feature>
<feature type="region of interest" description="Disordered" evidence="1">
    <location>
        <begin position="128"/>
        <end position="206"/>
    </location>
</feature>
<feature type="compositionally biased region" description="Polar residues" evidence="1">
    <location>
        <begin position="171"/>
        <end position="181"/>
    </location>
</feature>
<dbReference type="EMBL" id="CU329672">
    <property type="protein sequence ID" value="CAA22638.1"/>
    <property type="molecule type" value="Genomic_DNA"/>
</dbReference>
<dbReference type="PIR" id="T41232">
    <property type="entry name" value="T41232"/>
</dbReference>
<dbReference type="RefSeq" id="NP_588489.1">
    <property type="nucleotide sequence ID" value="NM_001023479.2"/>
</dbReference>
<dbReference type="BioGRID" id="275884">
    <property type="interactions" value="4"/>
</dbReference>
<dbReference type="iPTMnet" id="O94475"/>
<dbReference type="PaxDb" id="4896-SPCC1919.07.1"/>
<dbReference type="EnsemblFungi" id="SPCC1919.07.1">
    <property type="protein sequence ID" value="SPCC1919.07.1:pep"/>
    <property type="gene ID" value="SPCC1919.07"/>
</dbReference>
<dbReference type="KEGG" id="spo:2539318"/>
<dbReference type="PomBase" id="SPCC1919.07"/>
<dbReference type="VEuPathDB" id="FungiDB:SPCC1919.07"/>
<dbReference type="HOGENOM" id="CLU_1332619_0_0_1"/>
<dbReference type="InParanoid" id="O94475"/>
<dbReference type="OMA" id="TNEWRFQ"/>
<dbReference type="PRO" id="PR:O94475"/>
<dbReference type="Proteomes" id="UP000002485">
    <property type="component" value="Chromosome III"/>
</dbReference>
<dbReference type="GO" id="GO:0005829">
    <property type="term" value="C:cytosol"/>
    <property type="evidence" value="ECO:0007005"/>
    <property type="project" value="PomBase"/>
</dbReference>
<dbReference type="GO" id="GO:0005634">
    <property type="term" value="C:nucleus"/>
    <property type="evidence" value="ECO:0007005"/>
    <property type="project" value="PomBase"/>
</dbReference>
<comment type="subcellular location">
    <subcellularLocation>
        <location evidence="2">Cytoplasm</location>
    </subcellularLocation>
    <subcellularLocation>
        <location evidence="2">Nucleus</location>
    </subcellularLocation>
</comment>
<sequence length="206" mass="24049">MVVQDKWKRKATLAYKKKHDIHDAPVKPRKKNLGNNEWRFKNAGEYFDEDNNEEEYPSLESLKTVGNGDTIQDEEEDFEYSKLQARPLTGLGISNQKPKSKVRTIQREEVADMLESVEHEKSIQEFRKRYNVQKPKVNISHAEAEEDIDSFLESMDQSAPPSITEDKGENYISSNHSSMHISRNDSRNYMSEKPNKDQSWLDELLR</sequence>